<comment type="function">
    <text evidence="1">Involved in phosphonate degradation.</text>
</comment>
<comment type="catalytic activity">
    <reaction evidence="1">
        <text>(2-aminoethyl)phosphonate + pyruvate = phosphonoacetaldehyde + L-alanine</text>
        <dbReference type="Rhea" id="RHEA:17021"/>
        <dbReference type="ChEBI" id="CHEBI:15361"/>
        <dbReference type="ChEBI" id="CHEBI:57418"/>
        <dbReference type="ChEBI" id="CHEBI:57972"/>
        <dbReference type="ChEBI" id="CHEBI:58383"/>
        <dbReference type="EC" id="2.6.1.37"/>
    </reaction>
</comment>
<comment type="cofactor">
    <cofactor evidence="1">
        <name>pyridoxal 5'-phosphate</name>
        <dbReference type="ChEBI" id="CHEBI:597326"/>
    </cofactor>
</comment>
<comment type="subunit">
    <text evidence="1">Homodimer.</text>
</comment>
<comment type="similarity">
    <text evidence="1">Belongs to the class-V pyridoxal-phosphate-dependent aminotransferase family. PhnW subfamily.</text>
</comment>
<proteinExistence type="inferred from homology"/>
<keyword id="KW-0032">Aminotransferase</keyword>
<keyword id="KW-0663">Pyridoxal phosphate</keyword>
<keyword id="KW-0670">Pyruvate</keyword>
<keyword id="KW-0808">Transferase</keyword>
<name>PHNW_PSEPF</name>
<evidence type="ECO:0000255" key="1">
    <source>
        <dbReference type="HAMAP-Rule" id="MF_01376"/>
    </source>
</evidence>
<feature type="chain" id="PRO_0000286777" description="2-aminoethylphosphonate--pyruvate transaminase">
    <location>
        <begin position="1"/>
        <end position="369"/>
    </location>
</feature>
<feature type="modified residue" description="N6-(pyridoxal phosphate)lysine" evidence="1">
    <location>
        <position position="193"/>
    </location>
</feature>
<reference key="1">
    <citation type="journal article" date="2009" name="Genome Biol.">
        <title>Genomic and genetic analyses of diversity and plant interactions of Pseudomonas fluorescens.</title>
        <authorList>
            <person name="Silby M.W."/>
            <person name="Cerdeno-Tarraga A.M."/>
            <person name="Vernikos G.S."/>
            <person name="Giddens S.R."/>
            <person name="Jackson R.W."/>
            <person name="Preston G.M."/>
            <person name="Zhang X.-X."/>
            <person name="Moon C.D."/>
            <person name="Gehrig S.M."/>
            <person name="Godfrey S.A.C."/>
            <person name="Knight C.G."/>
            <person name="Malone J.G."/>
            <person name="Robinson Z."/>
            <person name="Spiers A.J."/>
            <person name="Harris S."/>
            <person name="Challis G.L."/>
            <person name="Yaxley A.M."/>
            <person name="Harris D."/>
            <person name="Seeger K."/>
            <person name="Murphy L."/>
            <person name="Rutter S."/>
            <person name="Squares R."/>
            <person name="Quail M.A."/>
            <person name="Saunders E."/>
            <person name="Mavromatis K."/>
            <person name="Brettin T.S."/>
            <person name="Bentley S.D."/>
            <person name="Hothersall J."/>
            <person name="Stephens E."/>
            <person name="Thomas C.M."/>
            <person name="Parkhill J."/>
            <person name="Levy S.B."/>
            <person name="Rainey P.B."/>
            <person name="Thomson N.R."/>
        </authorList>
    </citation>
    <scope>NUCLEOTIDE SEQUENCE [LARGE SCALE GENOMIC DNA]</scope>
    <source>
        <strain>Pf0-1</strain>
    </source>
</reference>
<organism>
    <name type="scientific">Pseudomonas fluorescens (strain Pf0-1)</name>
    <dbReference type="NCBI Taxonomy" id="205922"/>
    <lineage>
        <taxon>Bacteria</taxon>
        <taxon>Pseudomonadati</taxon>
        <taxon>Pseudomonadota</taxon>
        <taxon>Gammaproteobacteria</taxon>
        <taxon>Pseudomonadales</taxon>
        <taxon>Pseudomonadaceae</taxon>
        <taxon>Pseudomonas</taxon>
    </lineage>
</organism>
<sequence>MSTAAPILLTPGPLTTSARTRQAMMVDWGSWDDRFNQLTASLCEQLLAILNGADSHHCVPLQGSGTFAVEAAIGTLVPRDGKVLVLINGAYGKRLAKICEVLGRSFSTFETAEDEPTTAADVDRLLCADSDITHVALIHCETSTGILNPLPEIAQVVEQHGKRLIIDAMSSFGALPVDAQKVPFDALIAASGKCLEGVPGMGFVFARKESLAAAAGNSHSLAMDLFDQHSYMKKTGQWRFTPPTHVVAALHEALLQYNEEGGLPARHARYAANCQALMEEMGKLGLRSFLPAAIQAPIIATFHAPKDPRYQFKDFYERVKAKGYILYPGKLTQVETFRVGCIGHVTPAQMREAVAAVSEVLREMEVLDI</sequence>
<dbReference type="EC" id="2.6.1.37" evidence="1"/>
<dbReference type="EMBL" id="CP000094">
    <property type="protein sequence ID" value="ABA75421.1"/>
    <property type="molecule type" value="Genomic_DNA"/>
</dbReference>
<dbReference type="RefSeq" id="WP_011335026.1">
    <property type="nucleotide sequence ID" value="NC_007492.2"/>
</dbReference>
<dbReference type="SMR" id="Q3K9Y3"/>
<dbReference type="KEGG" id="pfo:Pfl01_3683"/>
<dbReference type="eggNOG" id="COG0075">
    <property type="taxonomic scope" value="Bacteria"/>
</dbReference>
<dbReference type="HOGENOM" id="CLU_027686_3_1_6"/>
<dbReference type="Proteomes" id="UP000002704">
    <property type="component" value="Chromosome"/>
</dbReference>
<dbReference type="GO" id="GO:0047304">
    <property type="term" value="F:2-aminoethylphosphonate-pyruvate transaminase activity"/>
    <property type="evidence" value="ECO:0007669"/>
    <property type="project" value="UniProtKB-UniRule"/>
</dbReference>
<dbReference type="GO" id="GO:0019700">
    <property type="term" value="P:organic phosphonate catabolic process"/>
    <property type="evidence" value="ECO:0007669"/>
    <property type="project" value="InterPro"/>
</dbReference>
<dbReference type="Gene3D" id="3.90.1150.10">
    <property type="entry name" value="Aspartate Aminotransferase, domain 1"/>
    <property type="match status" value="1"/>
</dbReference>
<dbReference type="Gene3D" id="3.40.640.10">
    <property type="entry name" value="Type I PLP-dependent aspartate aminotransferase-like (Major domain)"/>
    <property type="match status" value="1"/>
</dbReference>
<dbReference type="HAMAP" id="MF_01376">
    <property type="entry name" value="PhnW_aminotrans_5"/>
    <property type="match status" value="1"/>
</dbReference>
<dbReference type="InterPro" id="IPR000192">
    <property type="entry name" value="Aminotrans_V_dom"/>
</dbReference>
<dbReference type="InterPro" id="IPR012703">
    <property type="entry name" value="NH2EtPonate_pyrv_transaminase"/>
</dbReference>
<dbReference type="InterPro" id="IPR015424">
    <property type="entry name" value="PyrdxlP-dep_Trfase"/>
</dbReference>
<dbReference type="InterPro" id="IPR015421">
    <property type="entry name" value="PyrdxlP-dep_Trfase_major"/>
</dbReference>
<dbReference type="InterPro" id="IPR015422">
    <property type="entry name" value="PyrdxlP-dep_Trfase_small"/>
</dbReference>
<dbReference type="InterPro" id="IPR024169">
    <property type="entry name" value="SP_NH2Trfase/AEP_transaminase"/>
</dbReference>
<dbReference type="NCBIfam" id="TIGR03301">
    <property type="entry name" value="PhnW-AepZ"/>
    <property type="match status" value="1"/>
</dbReference>
<dbReference type="NCBIfam" id="NF010006">
    <property type="entry name" value="PRK13479.1"/>
    <property type="match status" value="1"/>
</dbReference>
<dbReference type="NCBIfam" id="TIGR02326">
    <property type="entry name" value="transamin_PhnW"/>
    <property type="match status" value="1"/>
</dbReference>
<dbReference type="PANTHER" id="PTHR42778">
    <property type="entry name" value="2-AMINOETHYLPHOSPHONATE--PYRUVATE TRANSAMINASE"/>
    <property type="match status" value="1"/>
</dbReference>
<dbReference type="PANTHER" id="PTHR42778:SF1">
    <property type="entry name" value="2-AMINOETHYLPHOSPHONATE--PYRUVATE TRANSAMINASE"/>
    <property type="match status" value="1"/>
</dbReference>
<dbReference type="Pfam" id="PF00266">
    <property type="entry name" value="Aminotran_5"/>
    <property type="match status" value="1"/>
</dbReference>
<dbReference type="PIRSF" id="PIRSF000524">
    <property type="entry name" value="SPT"/>
    <property type="match status" value="1"/>
</dbReference>
<dbReference type="SUPFAM" id="SSF53383">
    <property type="entry name" value="PLP-dependent transferases"/>
    <property type="match status" value="1"/>
</dbReference>
<accession>Q3K9Y3</accession>
<protein>
    <recommendedName>
        <fullName evidence="1">2-aminoethylphosphonate--pyruvate transaminase</fullName>
        <ecNumber evidence="1">2.6.1.37</ecNumber>
    </recommendedName>
    <alternativeName>
        <fullName evidence="1">2-aminoethylphosphonate aminotransferase</fullName>
    </alternativeName>
    <alternativeName>
        <fullName evidence="1">AEP transaminase</fullName>
        <shortName evidence="1">AEPT</shortName>
    </alternativeName>
</protein>
<gene>
    <name evidence="1" type="primary">phnW</name>
    <name type="ordered locus">Pfl01_3683</name>
</gene>